<sequence>MEVLESGEQSVLQWDRKLSELSEPGETEALMYHTHFSELLDEFSQNVLGQLLSDPFLSEKSESMEVEPSPTSPAPLIQAEHSYSLSEEPRTQSPFTHAATSDSFNDEEVESEKWYLSTEFPSATIKTEPITEEQPPGLVPSVTLTITAISTPFEKEESPLDMNAGGDSSCQTLIPKIKLEPHEVDQFLNFSPKEASVDQLHLPPTPPSSHSSDSEGSLSPNPRLHPFSLSQAHSPARAMPRGPSALSTSPLLTAPHKLQGSGPLVLTEEEKRTLVAEGYPIPTKLPLTKSEEKALKKIRRKIKNKISAQESRRKKKEYMDSLEKKVESCSTENLELRKKVEVLENTNRTLLQQLQKLQTLVMGKVSRTCKLAGTQTGTCLMVVVLCFAVAFGSFFQGYGPYPSATKMALPSQHPLSEPYTASVVRSRNLLIYEEHAPLEESSSPASAGELGGWDRGSSLLRASSGLEALPEVDLPHFLISNETSLEKSVLLELQQHLVSSKLEGNETLKVVELERRVNATF</sequence>
<name>CR3L2_MOUSE</name>
<organism>
    <name type="scientific">Mus musculus</name>
    <name type="common">Mouse</name>
    <dbReference type="NCBI Taxonomy" id="10090"/>
    <lineage>
        <taxon>Eukaryota</taxon>
        <taxon>Metazoa</taxon>
        <taxon>Chordata</taxon>
        <taxon>Craniata</taxon>
        <taxon>Vertebrata</taxon>
        <taxon>Euteleostomi</taxon>
        <taxon>Mammalia</taxon>
        <taxon>Eutheria</taxon>
        <taxon>Euarchontoglires</taxon>
        <taxon>Glires</taxon>
        <taxon>Rodentia</taxon>
        <taxon>Myomorpha</taxon>
        <taxon>Muroidea</taxon>
        <taxon>Muridae</taxon>
        <taxon>Murinae</taxon>
        <taxon>Mus</taxon>
        <taxon>Mus</taxon>
    </lineage>
</organism>
<keyword id="KW-0010">Activator</keyword>
<keyword id="KW-0217">Developmental protein</keyword>
<keyword id="KW-0238">DNA-binding</keyword>
<keyword id="KW-0256">Endoplasmic reticulum</keyword>
<keyword id="KW-0325">Glycoprotein</keyword>
<keyword id="KW-1017">Isopeptide bond</keyword>
<keyword id="KW-0472">Membrane</keyword>
<keyword id="KW-0539">Nucleus</keyword>
<keyword id="KW-0597">Phosphoprotein</keyword>
<keyword id="KW-1185">Reference proteome</keyword>
<keyword id="KW-0735">Signal-anchor</keyword>
<keyword id="KW-0804">Transcription</keyword>
<keyword id="KW-0805">Transcription regulation</keyword>
<keyword id="KW-0812">Transmembrane</keyword>
<keyword id="KW-1133">Transmembrane helix</keyword>
<keyword id="KW-0832">Ubl conjugation</keyword>
<keyword id="KW-0834">Unfolded protein response</keyword>
<proteinExistence type="evidence at protein level"/>
<protein>
    <recommendedName>
        <fullName>Cyclic AMP-responsive element-binding protein 3-like protein 2</fullName>
        <shortName>cAMP-responsive element-binding protein 3-like protein 2</shortName>
    </recommendedName>
    <component>
        <recommendedName>
            <fullName>Processed cyclic AMP-responsive element-binding protein 3-like protein 2</fullName>
        </recommendedName>
    </component>
</protein>
<dbReference type="EMBL" id="AK035695">
    <property type="protein sequence ID" value="BAC29155.1"/>
    <property type="molecule type" value="mRNA"/>
</dbReference>
<dbReference type="EMBL" id="AK036712">
    <property type="protein sequence ID" value="BAC29547.1"/>
    <property type="molecule type" value="mRNA"/>
</dbReference>
<dbReference type="EMBL" id="AK041050">
    <property type="protein sequence ID" value="BAC30798.1"/>
    <property type="molecule type" value="mRNA"/>
</dbReference>
<dbReference type="EMBL" id="AK041669">
    <property type="protein sequence ID" value="BAC31028.1"/>
    <property type="molecule type" value="mRNA"/>
</dbReference>
<dbReference type="EMBL" id="BC043466">
    <property type="protein sequence ID" value="AAH43466.1"/>
    <property type="molecule type" value="mRNA"/>
</dbReference>
<dbReference type="EMBL" id="BC138470">
    <property type="protein sequence ID" value="AAI38471.1"/>
    <property type="molecule type" value="mRNA"/>
</dbReference>
<dbReference type="EMBL" id="BC138471">
    <property type="protein sequence ID" value="AAI38472.1"/>
    <property type="molecule type" value="mRNA"/>
</dbReference>
<dbReference type="CCDS" id="CCDS20006.1"/>
<dbReference type="RefSeq" id="NP_848776.2">
    <property type="nucleotide sequence ID" value="NM_178661.4"/>
</dbReference>
<dbReference type="SMR" id="Q8BH52"/>
<dbReference type="BioGRID" id="229000">
    <property type="interactions" value="2"/>
</dbReference>
<dbReference type="FunCoup" id="Q8BH52">
    <property type="interactions" value="2265"/>
</dbReference>
<dbReference type="STRING" id="10090.ENSMUSP00000040208"/>
<dbReference type="GlyCosmos" id="Q8BH52">
    <property type="glycosylation" value="3 sites, No reported glycans"/>
</dbReference>
<dbReference type="GlyGen" id="Q8BH52">
    <property type="glycosylation" value="5 sites, 2 N-linked glycans (3 sites)"/>
</dbReference>
<dbReference type="iPTMnet" id="Q8BH52"/>
<dbReference type="PhosphoSitePlus" id="Q8BH52"/>
<dbReference type="jPOST" id="Q8BH52"/>
<dbReference type="PaxDb" id="10090-ENSMUSP00000040208"/>
<dbReference type="PeptideAtlas" id="Q8BH52"/>
<dbReference type="ProteomicsDB" id="284166"/>
<dbReference type="Pumba" id="Q8BH52"/>
<dbReference type="Antibodypedia" id="18186">
    <property type="antibodies" value="246 antibodies from 31 providers"/>
</dbReference>
<dbReference type="DNASU" id="208647"/>
<dbReference type="Ensembl" id="ENSMUST00000041093.6">
    <property type="protein sequence ID" value="ENSMUSP00000040208.6"/>
    <property type="gene ID" value="ENSMUSG00000038648.6"/>
</dbReference>
<dbReference type="GeneID" id="208647"/>
<dbReference type="KEGG" id="mmu:208647"/>
<dbReference type="UCSC" id="uc009bjf.2">
    <property type="organism name" value="mouse"/>
</dbReference>
<dbReference type="AGR" id="MGI:2442695"/>
<dbReference type="CTD" id="64764"/>
<dbReference type="MGI" id="MGI:2442695">
    <property type="gene designation" value="Creb3l2"/>
</dbReference>
<dbReference type="VEuPathDB" id="HostDB:ENSMUSG00000038648"/>
<dbReference type="eggNOG" id="KOG0709">
    <property type="taxonomic scope" value="Eukaryota"/>
</dbReference>
<dbReference type="GeneTree" id="ENSGT00940000157659"/>
<dbReference type="HOGENOM" id="CLU_037638_0_0_1"/>
<dbReference type="InParanoid" id="Q8BH52"/>
<dbReference type="OMA" id="CSNENME"/>
<dbReference type="OrthoDB" id="674948at2759"/>
<dbReference type="PhylomeDB" id="Q8BH52"/>
<dbReference type="TreeFam" id="TF316079"/>
<dbReference type="BioGRID-ORCS" id="208647">
    <property type="hits" value="5 hits in 82 CRISPR screens"/>
</dbReference>
<dbReference type="ChiTaRS" id="Creb3l2">
    <property type="organism name" value="mouse"/>
</dbReference>
<dbReference type="PRO" id="PR:Q8BH52"/>
<dbReference type="Proteomes" id="UP000000589">
    <property type="component" value="Chromosome 6"/>
</dbReference>
<dbReference type="RNAct" id="Q8BH52">
    <property type="molecule type" value="protein"/>
</dbReference>
<dbReference type="Bgee" id="ENSMUSG00000038648">
    <property type="expression patterns" value="Expressed in humerus cartilage element and 220 other cell types or tissues"/>
</dbReference>
<dbReference type="GO" id="GO:0005829">
    <property type="term" value="C:cytosol"/>
    <property type="evidence" value="ECO:0000304"/>
    <property type="project" value="Reactome"/>
</dbReference>
<dbReference type="GO" id="GO:0005783">
    <property type="term" value="C:endoplasmic reticulum"/>
    <property type="evidence" value="ECO:0000250"/>
    <property type="project" value="UniProtKB"/>
</dbReference>
<dbReference type="GO" id="GO:0005789">
    <property type="term" value="C:endoplasmic reticulum membrane"/>
    <property type="evidence" value="ECO:0000304"/>
    <property type="project" value="Reactome"/>
</dbReference>
<dbReference type="GO" id="GO:0000139">
    <property type="term" value="C:Golgi membrane"/>
    <property type="evidence" value="ECO:0000304"/>
    <property type="project" value="Reactome"/>
</dbReference>
<dbReference type="GO" id="GO:0005654">
    <property type="term" value="C:nucleoplasm"/>
    <property type="evidence" value="ECO:0000304"/>
    <property type="project" value="Reactome"/>
</dbReference>
<dbReference type="GO" id="GO:0005634">
    <property type="term" value="C:nucleus"/>
    <property type="evidence" value="ECO:0000250"/>
    <property type="project" value="UniProtKB"/>
</dbReference>
<dbReference type="GO" id="GO:0035497">
    <property type="term" value="F:cAMP response element binding"/>
    <property type="evidence" value="ECO:0000315"/>
    <property type="project" value="UniProtKB"/>
</dbReference>
<dbReference type="GO" id="GO:0001228">
    <property type="term" value="F:DNA-binding transcription activator activity, RNA polymerase II-specific"/>
    <property type="evidence" value="ECO:0000314"/>
    <property type="project" value="NTNU_SB"/>
</dbReference>
<dbReference type="GO" id="GO:0000978">
    <property type="term" value="F:RNA polymerase II cis-regulatory region sequence-specific DNA binding"/>
    <property type="evidence" value="ECO:0000314"/>
    <property type="project" value="NTNU_SB"/>
</dbReference>
<dbReference type="GO" id="GO:0000976">
    <property type="term" value="F:transcription cis-regulatory region binding"/>
    <property type="evidence" value="ECO:0000315"/>
    <property type="project" value="UniProtKB"/>
</dbReference>
<dbReference type="GO" id="GO:0051216">
    <property type="term" value="P:cartilage development"/>
    <property type="evidence" value="ECO:0000315"/>
    <property type="project" value="UniProtKB"/>
</dbReference>
<dbReference type="GO" id="GO:0002062">
    <property type="term" value="P:chondrocyte differentiation"/>
    <property type="evidence" value="ECO:0000315"/>
    <property type="project" value="UniProtKB"/>
</dbReference>
<dbReference type="GO" id="GO:0006888">
    <property type="term" value="P:endoplasmic reticulum to Golgi vesicle-mediated transport"/>
    <property type="evidence" value="ECO:0000315"/>
    <property type="project" value="UniProtKB"/>
</dbReference>
<dbReference type="GO" id="GO:0045893">
    <property type="term" value="P:positive regulation of DNA-templated transcription"/>
    <property type="evidence" value="ECO:0000314"/>
    <property type="project" value="UniProtKB"/>
</dbReference>
<dbReference type="GO" id="GO:0045944">
    <property type="term" value="P:positive regulation of transcription by RNA polymerase II"/>
    <property type="evidence" value="ECO:0000314"/>
    <property type="project" value="NTNU_SB"/>
</dbReference>
<dbReference type="GO" id="GO:0034976">
    <property type="term" value="P:response to endoplasmic reticulum stress"/>
    <property type="evidence" value="ECO:0000250"/>
    <property type="project" value="UniProtKB"/>
</dbReference>
<dbReference type="GO" id="GO:0006986">
    <property type="term" value="P:response to unfolded protein"/>
    <property type="evidence" value="ECO:0007669"/>
    <property type="project" value="UniProtKB-KW"/>
</dbReference>
<dbReference type="CDD" id="cd14689">
    <property type="entry name" value="bZIP_CREB3"/>
    <property type="match status" value="1"/>
</dbReference>
<dbReference type="FunFam" id="1.20.5.170:FF:000054">
    <property type="entry name" value="Cyclic AMP-responsive element-binding protein 3-like 2"/>
    <property type="match status" value="1"/>
</dbReference>
<dbReference type="Gene3D" id="1.20.5.170">
    <property type="match status" value="1"/>
</dbReference>
<dbReference type="InterPro" id="IPR004827">
    <property type="entry name" value="bZIP"/>
</dbReference>
<dbReference type="InterPro" id="IPR046347">
    <property type="entry name" value="bZIP_sf"/>
</dbReference>
<dbReference type="PANTHER" id="PTHR46004">
    <property type="entry name" value="CYCLIC AMP RESPONSE ELEMENT-BINDING PROTEIN A"/>
    <property type="match status" value="1"/>
</dbReference>
<dbReference type="PANTHER" id="PTHR46004:SF2">
    <property type="entry name" value="CYCLIC AMP-RESPONSIVE ELEMENT-BINDING PROTEIN 3-LIKE PROTEIN 2"/>
    <property type="match status" value="1"/>
</dbReference>
<dbReference type="Pfam" id="PF00170">
    <property type="entry name" value="bZIP_1"/>
    <property type="match status" value="1"/>
</dbReference>
<dbReference type="SMART" id="SM00338">
    <property type="entry name" value="BRLZ"/>
    <property type="match status" value="1"/>
</dbReference>
<dbReference type="SUPFAM" id="SSF57959">
    <property type="entry name" value="Leucine zipper domain"/>
    <property type="match status" value="1"/>
</dbReference>
<dbReference type="PROSITE" id="PS50217">
    <property type="entry name" value="BZIP"/>
    <property type="match status" value="1"/>
</dbReference>
<dbReference type="PROSITE" id="PS00036">
    <property type="entry name" value="BZIP_BASIC"/>
    <property type="match status" value="1"/>
</dbReference>
<comment type="function">
    <text evidence="6 7">Transcription factor involved in unfolded protein response (UPR). In the absence of endoplasmic reticulum (ER) stress, inserted into ER membranes, with N-terminal DNA-binding and transcription activation domains oriented toward the cytosolic face of the membrane. In response to ER stress, transported to the Golgi, where it is cleaved in a site-specific manner by resident proteases S1P/MBTPS1 and S2P/MBTPS2. The released N-terminal cytosolic domain is translocated to the nucleus to effect transcription of specific target genes. Plays a critical role in chondrogenesis by activating the transcription of SEC23A, which promotes the transport and secretion of cartilage matrix proteins, and possibly that of ER biogenesis-related genes (PubMed:19767744). In a neuroblastoma cell line, protects cells from ER stress-induced death (PubMed:17178827). In vitro activates transcription of target genes via direct binding to the CRE site (PubMed:17178827).</text>
</comment>
<comment type="subunit">
    <text evidence="1">Binds DNA as a dimer.</text>
</comment>
<comment type="subcellular location">
    <subcellularLocation>
        <location evidence="6">Endoplasmic reticulum membrane</location>
        <topology>Single-pass type II membrane protein</topology>
    </subcellularLocation>
    <text evidence="6">ER membrane resident protein. Upon ER stress, translocated to the Golgi apparatus where it is cleaved. The cytosolic N-terminal fragment (processed cyclic AMP-responsive element-binding protein 3-like protein 1) is transported into the nucleus.</text>
</comment>
<comment type="subcellular location">
    <molecule>Processed cyclic AMP-responsive element-binding protein 3-like protein 2</molecule>
    <subcellularLocation>
        <location evidence="6">Nucleus</location>
    </subcellularLocation>
    <text evidence="6">Upon ER stress, translocated into the nucleus.</text>
</comment>
<comment type="tissue specificity">
    <text evidence="6 7">Widely expressed, including in lung, bladder, ovary, testis and spleen (PubMed:17178827). Highly expressed in chondrocytes (PubMed:19767744).</text>
</comment>
<comment type="induction">
    <text evidence="6 7">Up-regulated by ER stress at the transcript and protein levels, the increase at the protein level is much higher than at the transcript level. This induction is accompanied by increased proteolytic cleavage that releases the N-terminal transcription factor domain. Up-regulated in brain areas undergoing ischemic injury, in neurons, but not astrocytes. Up-regulated by SOX9 during chondrocyte differentiation, possibly through SOX9-induced mild ER stress (PubMed:19767744).</text>
</comment>
<comment type="PTM">
    <text evidence="6">Upon ER stress, translocated to the Golgi apparatus, where it is processed by regulated intramembrane proteolysis (RIP) to release the cytosol-facing N-terminal transcription factor domain. The cleavage is performed sequentially by site-1 and site-2 proteases (S1P/MBTPS1 and S2P/MBTPS2).</text>
</comment>
<comment type="PTM">
    <text evidence="6">N-glycosylated.</text>
</comment>
<comment type="PTM">
    <text evidence="8">Ubiquitinated by HRD1/SYVN1; undergoes 'Lys-48'-linked ubiquitination, followed by rapid proteasomal degradation under normal conditions. Upon ER stress, SYVN1 E3 ubiquitin-protein ligase dissociates from its substrate, ubiquitination does not occur and CREB3L2 is stabilized.</text>
</comment>
<comment type="disruption phenotype">
    <text evidence="7">Mutant mice are born at the expected Mendelian rate, but die by suffocation shortly after birth because of an immature chest cavity. They exhibit severe chondrodysplasia. The cartilage shows a lack of typical columnar structure in the proliferating zone and a decrease in the size of the hypertrophic zone, resulting in a significant reduction of extracellular matrix proteins. Proliferating chondrocytes show abnormally expanded ER, containing aggregated type II collagen and cartilage oligomeric matrix protein (COMP). Displays significant decrease in Sec23a levels.</text>
</comment>
<comment type="similarity">
    <text evidence="9">Belongs to the bZIP family. ATF subfamily.</text>
</comment>
<reference key="1">
    <citation type="journal article" date="2005" name="Science">
        <title>The transcriptional landscape of the mammalian genome.</title>
        <authorList>
            <person name="Carninci P."/>
            <person name="Kasukawa T."/>
            <person name="Katayama S."/>
            <person name="Gough J."/>
            <person name="Frith M.C."/>
            <person name="Maeda N."/>
            <person name="Oyama R."/>
            <person name="Ravasi T."/>
            <person name="Lenhard B."/>
            <person name="Wells C."/>
            <person name="Kodzius R."/>
            <person name="Shimokawa K."/>
            <person name="Bajic V.B."/>
            <person name="Brenner S.E."/>
            <person name="Batalov S."/>
            <person name="Forrest A.R."/>
            <person name="Zavolan M."/>
            <person name="Davis M.J."/>
            <person name="Wilming L.G."/>
            <person name="Aidinis V."/>
            <person name="Allen J.E."/>
            <person name="Ambesi-Impiombato A."/>
            <person name="Apweiler R."/>
            <person name="Aturaliya R.N."/>
            <person name="Bailey T.L."/>
            <person name="Bansal M."/>
            <person name="Baxter L."/>
            <person name="Beisel K.W."/>
            <person name="Bersano T."/>
            <person name="Bono H."/>
            <person name="Chalk A.M."/>
            <person name="Chiu K.P."/>
            <person name="Choudhary V."/>
            <person name="Christoffels A."/>
            <person name="Clutterbuck D.R."/>
            <person name="Crowe M.L."/>
            <person name="Dalla E."/>
            <person name="Dalrymple B.P."/>
            <person name="de Bono B."/>
            <person name="Della Gatta G."/>
            <person name="di Bernardo D."/>
            <person name="Down T."/>
            <person name="Engstrom P."/>
            <person name="Fagiolini M."/>
            <person name="Faulkner G."/>
            <person name="Fletcher C.F."/>
            <person name="Fukushima T."/>
            <person name="Furuno M."/>
            <person name="Futaki S."/>
            <person name="Gariboldi M."/>
            <person name="Georgii-Hemming P."/>
            <person name="Gingeras T.R."/>
            <person name="Gojobori T."/>
            <person name="Green R.E."/>
            <person name="Gustincich S."/>
            <person name="Harbers M."/>
            <person name="Hayashi Y."/>
            <person name="Hensch T.K."/>
            <person name="Hirokawa N."/>
            <person name="Hill D."/>
            <person name="Huminiecki L."/>
            <person name="Iacono M."/>
            <person name="Ikeo K."/>
            <person name="Iwama A."/>
            <person name="Ishikawa T."/>
            <person name="Jakt M."/>
            <person name="Kanapin A."/>
            <person name="Katoh M."/>
            <person name="Kawasawa Y."/>
            <person name="Kelso J."/>
            <person name="Kitamura H."/>
            <person name="Kitano H."/>
            <person name="Kollias G."/>
            <person name="Krishnan S.P."/>
            <person name="Kruger A."/>
            <person name="Kummerfeld S.K."/>
            <person name="Kurochkin I.V."/>
            <person name="Lareau L.F."/>
            <person name="Lazarevic D."/>
            <person name="Lipovich L."/>
            <person name="Liu J."/>
            <person name="Liuni S."/>
            <person name="McWilliam S."/>
            <person name="Madan Babu M."/>
            <person name="Madera M."/>
            <person name="Marchionni L."/>
            <person name="Matsuda H."/>
            <person name="Matsuzawa S."/>
            <person name="Miki H."/>
            <person name="Mignone F."/>
            <person name="Miyake S."/>
            <person name="Morris K."/>
            <person name="Mottagui-Tabar S."/>
            <person name="Mulder N."/>
            <person name="Nakano N."/>
            <person name="Nakauchi H."/>
            <person name="Ng P."/>
            <person name="Nilsson R."/>
            <person name="Nishiguchi S."/>
            <person name="Nishikawa S."/>
            <person name="Nori F."/>
            <person name="Ohara O."/>
            <person name="Okazaki Y."/>
            <person name="Orlando V."/>
            <person name="Pang K.C."/>
            <person name="Pavan W.J."/>
            <person name="Pavesi G."/>
            <person name="Pesole G."/>
            <person name="Petrovsky N."/>
            <person name="Piazza S."/>
            <person name="Reed J."/>
            <person name="Reid J.F."/>
            <person name="Ring B.Z."/>
            <person name="Ringwald M."/>
            <person name="Rost B."/>
            <person name="Ruan Y."/>
            <person name="Salzberg S.L."/>
            <person name="Sandelin A."/>
            <person name="Schneider C."/>
            <person name="Schoenbach C."/>
            <person name="Sekiguchi K."/>
            <person name="Semple C.A."/>
            <person name="Seno S."/>
            <person name="Sessa L."/>
            <person name="Sheng Y."/>
            <person name="Shibata Y."/>
            <person name="Shimada H."/>
            <person name="Shimada K."/>
            <person name="Silva D."/>
            <person name="Sinclair B."/>
            <person name="Sperling S."/>
            <person name="Stupka E."/>
            <person name="Sugiura K."/>
            <person name="Sultana R."/>
            <person name="Takenaka Y."/>
            <person name="Taki K."/>
            <person name="Tammoja K."/>
            <person name="Tan S.L."/>
            <person name="Tang S."/>
            <person name="Taylor M.S."/>
            <person name="Tegner J."/>
            <person name="Teichmann S.A."/>
            <person name="Ueda H.R."/>
            <person name="van Nimwegen E."/>
            <person name="Verardo R."/>
            <person name="Wei C.L."/>
            <person name="Yagi K."/>
            <person name="Yamanishi H."/>
            <person name="Zabarovsky E."/>
            <person name="Zhu S."/>
            <person name="Zimmer A."/>
            <person name="Hide W."/>
            <person name="Bult C."/>
            <person name="Grimmond S.M."/>
            <person name="Teasdale R.D."/>
            <person name="Liu E.T."/>
            <person name="Brusic V."/>
            <person name="Quackenbush J."/>
            <person name="Wahlestedt C."/>
            <person name="Mattick J.S."/>
            <person name="Hume D.A."/>
            <person name="Kai C."/>
            <person name="Sasaki D."/>
            <person name="Tomaru Y."/>
            <person name="Fukuda S."/>
            <person name="Kanamori-Katayama M."/>
            <person name="Suzuki M."/>
            <person name="Aoki J."/>
            <person name="Arakawa T."/>
            <person name="Iida J."/>
            <person name="Imamura K."/>
            <person name="Itoh M."/>
            <person name="Kato T."/>
            <person name="Kawaji H."/>
            <person name="Kawagashira N."/>
            <person name="Kawashima T."/>
            <person name="Kojima M."/>
            <person name="Kondo S."/>
            <person name="Konno H."/>
            <person name="Nakano K."/>
            <person name="Ninomiya N."/>
            <person name="Nishio T."/>
            <person name="Okada M."/>
            <person name="Plessy C."/>
            <person name="Shibata K."/>
            <person name="Shiraki T."/>
            <person name="Suzuki S."/>
            <person name="Tagami M."/>
            <person name="Waki K."/>
            <person name="Watahiki A."/>
            <person name="Okamura-Oho Y."/>
            <person name="Suzuki H."/>
            <person name="Kawai J."/>
            <person name="Hayashizaki Y."/>
        </authorList>
    </citation>
    <scope>NUCLEOTIDE SEQUENCE [LARGE SCALE MRNA]</scope>
    <source>
        <strain>C57BL/6J</strain>
        <tissue>Blood vessel</tissue>
        <tissue>Bone</tissue>
        <tissue>Thymus</tissue>
        <tissue>Urinary bladder</tissue>
    </source>
</reference>
<reference key="2">
    <citation type="journal article" date="2004" name="Genome Res.">
        <title>The status, quality, and expansion of the NIH full-length cDNA project: the Mammalian Gene Collection (MGC).</title>
        <authorList>
            <consortium name="The MGC Project Team"/>
        </authorList>
    </citation>
    <scope>NUCLEOTIDE SEQUENCE [LARGE SCALE MRNA]</scope>
    <source>
        <strain>FVB/N</strain>
        <tissue>Brain</tissue>
        <tissue>Liver</tissue>
    </source>
</reference>
<reference key="3">
    <citation type="journal article" date="2007" name="Mol. Cell. Biol.">
        <title>BBF2H7, a novel transmembrane bZIP transcription factor, is a new type of endoplasmic reticulum stress transducer.</title>
        <authorList>
            <person name="Kondo S."/>
            <person name="Saito A."/>
            <person name="Hino S."/>
            <person name="Murakami T."/>
            <person name="Ogata M."/>
            <person name="Kanemoto S."/>
            <person name="Nara S."/>
            <person name="Yamashita A."/>
            <person name="Yoshinaga K."/>
            <person name="Hara H."/>
            <person name="Imaizumi K."/>
        </authorList>
    </citation>
    <scope>FUNCTION AS TRANSCRIPTION FACTOR</scope>
    <scope>SUBCELLULAR LOCATION</scope>
    <scope>GLYCOSYLATION</scope>
    <scope>INDUCTION BY ER STRESS</scope>
    <scope>PROTEOLYTIC CLEAVAGE</scope>
    <scope>TISSUE SPECIFICITY</scope>
    <scope>MUTAGENESIS OF ARG-427 AND LEU-430</scope>
</reference>
<reference key="4">
    <citation type="journal article" date="2009" name="Nat. Cell Biol.">
        <title>Regulation of endoplasmic reticulum stress response by a BBF2H7-mediated Sec23a pathway is essential for chondrogenesis.</title>
        <authorList>
            <person name="Saito A."/>
            <person name="Hino S."/>
            <person name="Murakami T."/>
            <person name="Kanemoto S."/>
            <person name="Kondo S."/>
            <person name="Saitoh M."/>
            <person name="Nishimura R."/>
            <person name="Yoneda T."/>
            <person name="Furuichi T."/>
            <person name="Ikegawa S."/>
            <person name="Ikawa M."/>
            <person name="Okabe M."/>
            <person name="Imaizumi K."/>
        </authorList>
    </citation>
    <scope>FUNCTION IN CHONDROGENESIS</scope>
    <scope>TISSUE SPECIFICITY</scope>
    <scope>DISRUPTION PHENOTYPE</scope>
    <scope>INDUCTION BY ER STRESS AND SOX9</scope>
</reference>
<reference key="5">
    <citation type="journal article" date="2012" name="Cell Death Differ.">
        <title>Activation of OASIS family, ER stress transducers, is dependent on its stabilization.</title>
        <authorList>
            <person name="Kondo S."/>
            <person name="Hino S.I."/>
            <person name="Saito A."/>
            <person name="Kanemoto S."/>
            <person name="Kawasaki N."/>
            <person name="Asada R."/>
            <person name="Izumi S."/>
            <person name="Iwamoto H."/>
            <person name="Oki M."/>
            <person name="Miyagi H."/>
            <person name="Kaneko M."/>
            <person name="Nomura Y."/>
            <person name="Urano F."/>
            <person name="Imaizumi K."/>
        </authorList>
    </citation>
    <scope>UBIQUITINATION</scope>
</reference>
<feature type="chain" id="PRO_0000288068" description="Cyclic AMP-responsive element-binding protein 3-like protein 2">
    <location>
        <begin position="1"/>
        <end position="521"/>
    </location>
</feature>
<feature type="chain" id="PRO_0000296210" description="Processed cyclic AMP-responsive element-binding protein 3-like protein 2">
    <location>
        <begin position="1"/>
        <end status="unknown"/>
    </location>
</feature>
<feature type="topological domain" description="Cytoplasmic" evidence="3">
    <location>
        <begin position="1"/>
        <end position="378"/>
    </location>
</feature>
<feature type="transmembrane region" description="Helical; Signal-anchor for type II membrane protein" evidence="3">
    <location>
        <begin position="379"/>
        <end position="399"/>
    </location>
</feature>
<feature type="topological domain" description="Lumenal" evidence="3">
    <location>
        <begin position="400"/>
        <end position="521"/>
    </location>
</feature>
<feature type="domain" description="bZIP" evidence="4">
    <location>
        <begin position="294"/>
        <end position="357"/>
    </location>
</feature>
<feature type="region of interest" description="Disordered" evidence="5">
    <location>
        <begin position="83"/>
        <end position="106"/>
    </location>
</feature>
<feature type="region of interest" description="Disordered" evidence="5">
    <location>
        <begin position="196"/>
        <end position="264"/>
    </location>
</feature>
<feature type="region of interest" description="Basic motif" evidence="4">
    <location>
        <begin position="296"/>
        <end position="325"/>
    </location>
</feature>
<feature type="region of interest" description="Leucine-zipper" evidence="4">
    <location>
        <begin position="336"/>
        <end position="357"/>
    </location>
</feature>
<feature type="short sequence motif" description="S1P recognition" evidence="2">
    <location>
        <begin position="427"/>
        <end position="430"/>
    </location>
</feature>
<feature type="compositionally biased region" description="Polar residues" evidence="5">
    <location>
        <begin position="83"/>
        <end position="103"/>
    </location>
</feature>
<feature type="compositionally biased region" description="Low complexity" evidence="5">
    <location>
        <begin position="208"/>
        <end position="220"/>
    </location>
</feature>
<feature type="modified residue" description="Phosphoserine" evidence="2">
    <location>
        <position position="93"/>
    </location>
</feature>
<feature type="modified residue" description="Phosphoserine" evidence="2">
    <location>
        <position position="191"/>
    </location>
</feature>
<feature type="glycosylation site" description="N-linked (GlcNAc...) asparagine" evidence="3">
    <location>
        <position position="481"/>
    </location>
</feature>
<feature type="glycosylation site" description="N-linked (GlcNAc...) asparagine" evidence="3">
    <location>
        <position position="505"/>
    </location>
</feature>
<feature type="glycosylation site" description="N-linked (GlcNAc...) asparagine" evidence="3">
    <location>
        <position position="518"/>
    </location>
</feature>
<feature type="cross-link" description="Glycyl lysine isopeptide (Lys-Gly) (interchain with G-Cter in SUMO2)" evidence="2">
    <location>
        <position position="178"/>
    </location>
</feature>
<feature type="mutagenesis site" description="Loss of S1P cleavage." evidence="6">
    <original>R</original>
    <variation>A</variation>
    <location>
        <position position="427"/>
    </location>
</feature>
<feature type="mutagenesis site" description="Loss of S1P cleavage; when associated with V-430." evidence="6">
    <original>R</original>
    <variation>A</variation>
    <location>
        <position position="427"/>
    </location>
</feature>
<feature type="mutagenesis site" description="Loss of S1P cleavage." evidence="6">
    <original>L</original>
    <variation>V</variation>
    <location>
        <position position="430"/>
    </location>
</feature>
<feature type="mutagenesis site" description="Loss of S1P cleavage; when associated with A-427." evidence="6">
    <original>L</original>
    <variation>V</variation>
    <location>
        <position position="430"/>
    </location>
</feature>
<feature type="sequence conflict" description="In Ref. 1; BAC29155." evidence="9" ref="1">
    <original>L</original>
    <variation>R</variation>
    <location>
        <position position="264"/>
    </location>
</feature>
<feature type="sequence conflict" description="In Ref. 1; BAC29547." evidence="9" ref="1">
    <original>N</original>
    <variation>D</variation>
    <location>
        <position position="345"/>
    </location>
</feature>
<accession>Q8BH52</accession>
<accession>B2RRL0</accession>
<accession>Q8CB61</accession>
<accession>Q8CBN2</accession>
<evidence type="ECO:0000250" key="1"/>
<evidence type="ECO:0000250" key="2">
    <source>
        <dbReference type="UniProtKB" id="Q70SY1"/>
    </source>
</evidence>
<evidence type="ECO:0000255" key="3"/>
<evidence type="ECO:0000255" key="4">
    <source>
        <dbReference type="PROSITE-ProRule" id="PRU00978"/>
    </source>
</evidence>
<evidence type="ECO:0000256" key="5">
    <source>
        <dbReference type="SAM" id="MobiDB-lite"/>
    </source>
</evidence>
<evidence type="ECO:0000269" key="6">
    <source>
    </source>
</evidence>
<evidence type="ECO:0000269" key="7">
    <source>
    </source>
</evidence>
<evidence type="ECO:0000269" key="8">
    <source>
    </source>
</evidence>
<evidence type="ECO:0000305" key="9"/>
<gene>
    <name type="primary">Creb3l2</name>
    <name type="synonym">Bbf2h7</name>
</gene>